<evidence type="ECO:0000250" key="1">
    <source>
        <dbReference type="UniProtKB" id="Q65132"/>
    </source>
</evidence>
<evidence type="ECO:0000256" key="2">
    <source>
        <dbReference type="SAM" id="MobiDB-lite"/>
    </source>
</evidence>
<evidence type="ECO:0000305" key="3"/>
<reference key="1">
    <citation type="submission" date="2003-03" db="EMBL/GenBank/DDBJ databases">
        <title>African swine fever virus genomes.</title>
        <authorList>
            <person name="Kutish G.F."/>
            <person name="Rock D.L."/>
        </authorList>
    </citation>
    <scope>NUCLEOTIDE SEQUENCE [LARGE SCALE GENOMIC DNA]</scope>
</reference>
<name>L83L_ASFWA</name>
<feature type="chain" id="PRO_0000373738" description="Protein L83L">
    <location>
        <begin position="1"/>
        <end position="81"/>
    </location>
</feature>
<feature type="region of interest" description="Disordered" evidence="2">
    <location>
        <begin position="1"/>
        <end position="28"/>
    </location>
</feature>
<feature type="compositionally biased region" description="Basic and acidic residues" evidence="2">
    <location>
        <begin position="14"/>
        <end position="28"/>
    </location>
</feature>
<organismHost>
    <name type="scientific">Ornithodoros</name>
    <name type="common">relapsing fever ticks</name>
    <dbReference type="NCBI Taxonomy" id="6937"/>
</organismHost>
<organismHost>
    <name type="scientific">Phacochoerus aethiopicus</name>
    <name type="common">Warthog</name>
    <dbReference type="NCBI Taxonomy" id="85517"/>
</organismHost>
<organismHost>
    <name type="scientific">Phacochoerus africanus</name>
    <name type="common">Warthog</name>
    <dbReference type="NCBI Taxonomy" id="41426"/>
</organismHost>
<organismHost>
    <name type="scientific">Potamochoerus larvatus</name>
    <name type="common">Bushpig</name>
    <dbReference type="NCBI Taxonomy" id="273792"/>
</organismHost>
<organismHost>
    <name type="scientific">Sus scrofa</name>
    <name type="common">Pig</name>
    <dbReference type="NCBI Taxonomy" id="9823"/>
</organismHost>
<sequence length="81" mass="9404">MDTSLKNNDGALEADNKNYQDYKDEPDKTSDVLDVTKHNSMVDCCHKNYSTFTSEWYINERKYNDVPEGPKKADVHRCTII</sequence>
<protein>
    <recommendedName>
        <fullName>Protein L83L</fullName>
    </recommendedName>
</protein>
<dbReference type="EMBL" id="AY261366">
    <property type="status" value="NOT_ANNOTATED_CDS"/>
    <property type="molecule type" value="Genomic_DNA"/>
</dbReference>
<dbReference type="SMR" id="P0CAK9"/>
<dbReference type="Proteomes" id="UP000000858">
    <property type="component" value="Segment"/>
</dbReference>
<dbReference type="GO" id="GO:0030430">
    <property type="term" value="C:host cell cytoplasm"/>
    <property type="evidence" value="ECO:0007669"/>
    <property type="project" value="UniProtKB-SubCell"/>
</dbReference>
<keyword id="KW-0244">Early protein</keyword>
<keyword id="KW-1035">Host cytoplasm</keyword>
<keyword id="KW-0945">Host-virus interaction</keyword>
<proteinExistence type="inferred from homology"/>
<comment type="function">
    <text evidence="1">May subvert the host innate immune response by interacting with host IL1B and interfering with its function.</text>
</comment>
<comment type="subunit">
    <text evidence="1">Interacts with host IL1B.</text>
</comment>
<comment type="subcellular location">
    <subcellularLocation>
        <location evidence="1">Host cytoplasm</location>
    </subcellularLocation>
</comment>
<comment type="induction">
    <text evidence="3">Expressed in the early phase of the viral replicative cycle.</text>
</comment>
<comment type="similarity">
    <text evidence="3">Belongs to the asfivirus L83L family.</text>
</comment>
<organism>
    <name type="scientific">African swine fever virus (isolate Warthog/Namibia/Wart80/1980)</name>
    <name type="common">ASFV</name>
    <dbReference type="NCBI Taxonomy" id="561444"/>
    <lineage>
        <taxon>Viruses</taxon>
        <taxon>Varidnaviria</taxon>
        <taxon>Bamfordvirae</taxon>
        <taxon>Nucleocytoviricota</taxon>
        <taxon>Pokkesviricetes</taxon>
        <taxon>Asfuvirales</taxon>
        <taxon>Asfarviridae</taxon>
        <taxon>Asfivirus</taxon>
        <taxon>African swine fever virus</taxon>
    </lineage>
</organism>
<gene>
    <name type="ordered locus">War-004</name>
</gene>
<accession>P0CAK9</accession>